<gene>
    <name evidence="1" type="primary">cysC</name>
    <name type="ordered locus">Bamb_0664</name>
</gene>
<sequence>MKQKKVFVVWLTGVSGAGKSTLANLLKQQLDARGLRTYLLDGDTLRNGLNQDLGFSDADRRENIRRTAEVARLMMDAGFIVIAALISPFRDARSRARARFAPGTFIEVFVDVALEVAEARDPKGLYVLARQGAIPQFTGIGSAYENPLSPEVHVRTAETSPSECIATIMQKLPLDTDVGAP</sequence>
<evidence type="ECO:0000255" key="1">
    <source>
        <dbReference type="HAMAP-Rule" id="MF_00065"/>
    </source>
</evidence>
<dbReference type="EC" id="2.7.1.25" evidence="1"/>
<dbReference type="EMBL" id="CP000440">
    <property type="protein sequence ID" value="ABI86223.1"/>
    <property type="molecule type" value="Genomic_DNA"/>
</dbReference>
<dbReference type="RefSeq" id="WP_011656055.1">
    <property type="nucleotide sequence ID" value="NZ_CP009798.1"/>
</dbReference>
<dbReference type="SMR" id="Q0BI00"/>
<dbReference type="GeneID" id="93083926"/>
<dbReference type="KEGG" id="bam:Bamb_0664"/>
<dbReference type="eggNOG" id="COG0529">
    <property type="taxonomic scope" value="Bacteria"/>
</dbReference>
<dbReference type="UniPathway" id="UPA00140">
    <property type="reaction ID" value="UER00205"/>
</dbReference>
<dbReference type="Proteomes" id="UP000000662">
    <property type="component" value="Chromosome 1"/>
</dbReference>
<dbReference type="GO" id="GO:0004020">
    <property type="term" value="F:adenylylsulfate kinase activity"/>
    <property type="evidence" value="ECO:0007669"/>
    <property type="project" value="UniProtKB-UniRule"/>
</dbReference>
<dbReference type="GO" id="GO:0005524">
    <property type="term" value="F:ATP binding"/>
    <property type="evidence" value="ECO:0007669"/>
    <property type="project" value="UniProtKB-UniRule"/>
</dbReference>
<dbReference type="GO" id="GO:0070814">
    <property type="term" value="P:hydrogen sulfide biosynthetic process"/>
    <property type="evidence" value="ECO:0007669"/>
    <property type="project" value="UniProtKB-UniRule"/>
</dbReference>
<dbReference type="GO" id="GO:0000103">
    <property type="term" value="P:sulfate assimilation"/>
    <property type="evidence" value="ECO:0007669"/>
    <property type="project" value="UniProtKB-UniRule"/>
</dbReference>
<dbReference type="CDD" id="cd02027">
    <property type="entry name" value="APSK"/>
    <property type="match status" value="1"/>
</dbReference>
<dbReference type="Gene3D" id="3.40.50.300">
    <property type="entry name" value="P-loop containing nucleotide triphosphate hydrolases"/>
    <property type="match status" value="1"/>
</dbReference>
<dbReference type="HAMAP" id="MF_00065">
    <property type="entry name" value="Adenylyl_sulf_kinase"/>
    <property type="match status" value="1"/>
</dbReference>
<dbReference type="InterPro" id="IPR002891">
    <property type="entry name" value="APS_kinase"/>
</dbReference>
<dbReference type="InterPro" id="IPR027417">
    <property type="entry name" value="P-loop_NTPase"/>
</dbReference>
<dbReference type="NCBIfam" id="TIGR00455">
    <property type="entry name" value="apsK"/>
    <property type="match status" value="1"/>
</dbReference>
<dbReference type="NCBIfam" id="NF003013">
    <property type="entry name" value="PRK03846.1"/>
    <property type="match status" value="1"/>
</dbReference>
<dbReference type="PANTHER" id="PTHR11055:SF63">
    <property type="entry name" value="ADENYLYL-SULFATE KINASE 1, CHLOROPLASTIC"/>
    <property type="match status" value="1"/>
</dbReference>
<dbReference type="PANTHER" id="PTHR11055">
    <property type="entry name" value="BIFUNCTIONAL 3'-PHOSPHOADENOSINE 5'-PHOSPHOSULFATE SYNTHASE"/>
    <property type="match status" value="1"/>
</dbReference>
<dbReference type="Pfam" id="PF01583">
    <property type="entry name" value="APS_kinase"/>
    <property type="match status" value="1"/>
</dbReference>
<dbReference type="SUPFAM" id="SSF52540">
    <property type="entry name" value="P-loop containing nucleoside triphosphate hydrolases"/>
    <property type="match status" value="1"/>
</dbReference>
<accession>Q0BI00</accession>
<proteinExistence type="inferred from homology"/>
<feature type="chain" id="PRO_1000092237" description="Adenylyl-sulfate kinase">
    <location>
        <begin position="1"/>
        <end position="181"/>
    </location>
</feature>
<feature type="active site" description="Phosphoserine intermediate" evidence="1">
    <location>
        <position position="87"/>
    </location>
</feature>
<feature type="binding site" evidence="1">
    <location>
        <begin position="13"/>
        <end position="20"/>
    </location>
    <ligand>
        <name>ATP</name>
        <dbReference type="ChEBI" id="CHEBI:30616"/>
    </ligand>
</feature>
<reference key="1">
    <citation type="submission" date="2006-08" db="EMBL/GenBank/DDBJ databases">
        <title>Complete sequence of chromosome 1 of Burkholderia cepacia AMMD.</title>
        <authorList>
            <person name="Copeland A."/>
            <person name="Lucas S."/>
            <person name="Lapidus A."/>
            <person name="Barry K."/>
            <person name="Detter J.C."/>
            <person name="Glavina del Rio T."/>
            <person name="Hammon N."/>
            <person name="Israni S."/>
            <person name="Pitluck S."/>
            <person name="Bruce D."/>
            <person name="Chain P."/>
            <person name="Malfatti S."/>
            <person name="Shin M."/>
            <person name="Vergez L."/>
            <person name="Schmutz J."/>
            <person name="Larimer F."/>
            <person name="Land M."/>
            <person name="Hauser L."/>
            <person name="Kyrpides N."/>
            <person name="Kim E."/>
            <person name="Parke J."/>
            <person name="Coenye T."/>
            <person name="Konstantinidis K."/>
            <person name="Ramette A."/>
            <person name="Tiedje J."/>
            <person name="Richardson P."/>
        </authorList>
    </citation>
    <scope>NUCLEOTIDE SEQUENCE [LARGE SCALE GENOMIC DNA]</scope>
    <source>
        <strain>ATCC BAA-244 / DSM 16087 / CCUG 44356 / LMG 19182 / AMMD</strain>
    </source>
</reference>
<protein>
    <recommendedName>
        <fullName evidence="1">Adenylyl-sulfate kinase</fullName>
        <ecNumber evidence="1">2.7.1.25</ecNumber>
    </recommendedName>
    <alternativeName>
        <fullName evidence="1">APS kinase</fullName>
    </alternativeName>
    <alternativeName>
        <fullName evidence="1">ATP adenosine-5'-phosphosulfate 3'-phosphotransferase</fullName>
    </alternativeName>
    <alternativeName>
        <fullName evidence="1">Adenosine-5'-phosphosulfate kinase</fullName>
    </alternativeName>
</protein>
<comment type="function">
    <text evidence="1">Catalyzes the synthesis of activated sulfate.</text>
</comment>
<comment type="catalytic activity">
    <reaction evidence="1">
        <text>adenosine 5'-phosphosulfate + ATP = 3'-phosphoadenylyl sulfate + ADP + H(+)</text>
        <dbReference type="Rhea" id="RHEA:24152"/>
        <dbReference type="ChEBI" id="CHEBI:15378"/>
        <dbReference type="ChEBI" id="CHEBI:30616"/>
        <dbReference type="ChEBI" id="CHEBI:58243"/>
        <dbReference type="ChEBI" id="CHEBI:58339"/>
        <dbReference type="ChEBI" id="CHEBI:456216"/>
        <dbReference type="EC" id="2.7.1.25"/>
    </reaction>
</comment>
<comment type="pathway">
    <text evidence="1">Sulfur metabolism; hydrogen sulfide biosynthesis; sulfite from sulfate: step 2/3.</text>
</comment>
<comment type="similarity">
    <text evidence="1">Belongs to the APS kinase family.</text>
</comment>
<name>CYSC_BURCM</name>
<organism>
    <name type="scientific">Burkholderia ambifaria (strain ATCC BAA-244 / DSM 16087 / CCUG 44356 / LMG 19182 / AMMD)</name>
    <name type="common">Burkholderia cepacia (strain AMMD)</name>
    <dbReference type="NCBI Taxonomy" id="339670"/>
    <lineage>
        <taxon>Bacteria</taxon>
        <taxon>Pseudomonadati</taxon>
        <taxon>Pseudomonadota</taxon>
        <taxon>Betaproteobacteria</taxon>
        <taxon>Burkholderiales</taxon>
        <taxon>Burkholderiaceae</taxon>
        <taxon>Burkholderia</taxon>
        <taxon>Burkholderia cepacia complex</taxon>
    </lineage>
</organism>
<keyword id="KW-0067">ATP-binding</keyword>
<keyword id="KW-0418">Kinase</keyword>
<keyword id="KW-0547">Nucleotide-binding</keyword>
<keyword id="KW-0597">Phosphoprotein</keyword>
<keyword id="KW-0808">Transferase</keyword>